<reference key="1">
    <citation type="journal article" date="1992" name="J. Bacteriol.">
        <title>Sequence analysis and characterization of the mobilization region of a broad-host-range plasmid, pTF-FC2, isolated from Thiobacillus ferrooxidans.</title>
        <authorList>
            <person name="Rohrer J."/>
            <person name="Rawlings D.E."/>
        </authorList>
    </citation>
    <scope>NUCLEOTIDE SEQUENCE [GENOMIC DNA]</scope>
</reference>
<feature type="chain" id="PRO_0000068510" description="Uncharacterized 9.0 kDa protein in mobE 3'region">
    <location>
        <begin position="1"/>
        <end position="85"/>
    </location>
</feature>
<geneLocation type="plasmid">
    <name>pTF-FC2</name>
</geneLocation>
<organism>
    <name type="scientific">Acidithiobacillus ferrooxidans</name>
    <name type="common">Thiobacillus ferrooxidans</name>
    <dbReference type="NCBI Taxonomy" id="920"/>
    <lineage>
        <taxon>Bacteria</taxon>
        <taxon>Pseudomonadati</taxon>
        <taxon>Pseudomonadota</taxon>
        <taxon>Acidithiobacillia</taxon>
        <taxon>Acidithiobacillales</taxon>
        <taxon>Acidithiobacillaceae</taxon>
        <taxon>Acidithiobacillus</taxon>
    </lineage>
</organism>
<proteinExistence type="predicted"/>
<keyword id="KW-0614">Plasmid</keyword>
<name>YME3_ACIFR</name>
<sequence length="85" mass="9052">MTTKRKVEVFSAGCPSCQTAIELVNRLACGSCEVSILDMNDINVAKRARDLGVRSVPAVAINGQLASCCSGSGIEEQALRWPRQA</sequence>
<dbReference type="EMBL" id="L37364">
    <property type="protein sequence ID" value="AAA91275.1"/>
    <property type="molecule type" value="Genomic_DNA"/>
</dbReference>
<dbReference type="EMBL" id="M57717">
    <property type="protein sequence ID" value="AAA27395.1"/>
    <property type="molecule type" value="Genomic_DNA"/>
</dbReference>
<dbReference type="PIR" id="H43256">
    <property type="entry name" value="H43256"/>
</dbReference>
<dbReference type="Gene3D" id="3.40.30.10">
    <property type="entry name" value="Glutaredoxin"/>
    <property type="match status" value="1"/>
</dbReference>
<dbReference type="InterPro" id="IPR012336">
    <property type="entry name" value="Thioredoxin-like_fold"/>
</dbReference>
<dbReference type="InterPro" id="IPR036249">
    <property type="entry name" value="Thioredoxin-like_sf"/>
</dbReference>
<dbReference type="Pfam" id="PF13192">
    <property type="entry name" value="Thioredoxin_3"/>
    <property type="match status" value="1"/>
</dbReference>
<dbReference type="SUPFAM" id="SSF52833">
    <property type="entry name" value="Thioredoxin-like"/>
    <property type="match status" value="1"/>
</dbReference>
<accession>P22904</accession>
<protein>
    <recommendedName>
        <fullName>Uncharacterized 9.0 kDa protein in mobE 3'region</fullName>
    </recommendedName>
    <alternativeName>
        <fullName>ORF 8</fullName>
    </alternativeName>
</protein>